<feature type="chain" id="PRO_0000091501" description="Tetracycline resistance protein TetM">
    <location>
        <begin position="1"/>
        <end position="639"/>
    </location>
</feature>
<feature type="domain" description="tr-type G" evidence="2">
    <location>
        <begin position="1"/>
        <end position="247"/>
    </location>
</feature>
<feature type="region of interest" description="Disordered" evidence="3">
    <location>
        <begin position="247"/>
        <end position="267"/>
    </location>
</feature>
<feature type="region of interest" description="Disordered" evidence="3">
    <location>
        <begin position="611"/>
        <end position="639"/>
    </location>
</feature>
<feature type="compositionally biased region" description="Gly residues" evidence="3">
    <location>
        <begin position="627"/>
        <end position="639"/>
    </location>
</feature>
<feature type="binding site" evidence="1">
    <location>
        <begin position="10"/>
        <end position="17"/>
    </location>
    <ligand>
        <name>GTP</name>
        <dbReference type="ChEBI" id="CHEBI:37565"/>
    </ligand>
</feature>
<feature type="binding site" evidence="1">
    <location>
        <begin position="74"/>
        <end position="78"/>
    </location>
    <ligand>
        <name>GTP</name>
        <dbReference type="ChEBI" id="CHEBI:37565"/>
    </ligand>
</feature>
<feature type="binding site" evidence="1">
    <location>
        <begin position="128"/>
        <end position="131"/>
    </location>
    <ligand>
        <name>GTP</name>
        <dbReference type="ChEBI" id="CHEBI:37565"/>
    </ligand>
</feature>
<proteinExistence type="inferred from homology"/>
<accession>Q02652</accession>
<comment type="function">
    <text>Abolishes the inhibitory effect of tetracyclin on protein synthesis by a non-covalent modification of the ribosomes.</text>
</comment>
<comment type="similarity">
    <text evidence="2">Belongs to the TRAFAC class translation factor GTPase superfamily. Classic translation factor GTPase family. TetM/TetO subfamily.</text>
</comment>
<protein>
    <recommendedName>
        <fullName>Tetracycline resistance protein TetM</fullName>
    </recommendedName>
</protein>
<reference key="1">
    <citation type="journal article" date="1992" name="Antimicrob. Agents Chemother.">
        <title>The unstable tetracycline resistance gene of Streptomyces lividans 1326 encodes a putative protein with similarities to translational elongation factors and Tet(M) and Tet(O) proteins.</title>
        <authorList>
            <person name="Dittrich W."/>
            <person name="Schrempf H."/>
        </authorList>
    </citation>
    <scope>NUCLEOTIDE SEQUENCE [GENOMIC DNA]</scope>
    <source>
        <strain>66 / 1326</strain>
    </source>
</reference>
<gene>
    <name type="primary">tetM</name>
    <name type="synonym">tet</name>
</gene>
<organism>
    <name type="scientific">Streptomyces lividans</name>
    <dbReference type="NCBI Taxonomy" id="1916"/>
    <lineage>
        <taxon>Bacteria</taxon>
        <taxon>Bacillati</taxon>
        <taxon>Actinomycetota</taxon>
        <taxon>Actinomycetes</taxon>
        <taxon>Kitasatosporales</taxon>
        <taxon>Streptomycetaceae</taxon>
        <taxon>Streptomyces</taxon>
    </lineage>
</organism>
<evidence type="ECO:0000250" key="1"/>
<evidence type="ECO:0000255" key="2">
    <source>
        <dbReference type="PROSITE-ProRule" id="PRU01059"/>
    </source>
</evidence>
<evidence type="ECO:0000256" key="3">
    <source>
        <dbReference type="SAM" id="MobiDB-lite"/>
    </source>
</evidence>
<dbReference type="EMBL" id="M74049">
    <property type="protein sequence ID" value="AAA26830.1"/>
    <property type="molecule type" value="Genomic_DNA"/>
</dbReference>
<dbReference type="PIR" id="A48900">
    <property type="entry name" value="A48900"/>
</dbReference>
<dbReference type="SMR" id="Q02652"/>
<dbReference type="CARD" id="ARO:3007127">
    <property type="molecule name" value="otr(A)S.liv"/>
    <property type="mechanism identifier" value="ARO:0001003"/>
    <property type="mechanism name" value="antibiotic target protection"/>
</dbReference>
<dbReference type="KEGG" id="ag:AAA26830"/>
<dbReference type="GO" id="GO:0005737">
    <property type="term" value="C:cytoplasm"/>
    <property type="evidence" value="ECO:0007669"/>
    <property type="project" value="UniProtKB-ARBA"/>
</dbReference>
<dbReference type="GO" id="GO:0005525">
    <property type="term" value="F:GTP binding"/>
    <property type="evidence" value="ECO:0007669"/>
    <property type="project" value="UniProtKB-KW"/>
</dbReference>
<dbReference type="GO" id="GO:0003924">
    <property type="term" value="F:GTPase activity"/>
    <property type="evidence" value="ECO:0007669"/>
    <property type="project" value="InterPro"/>
</dbReference>
<dbReference type="GO" id="GO:0003746">
    <property type="term" value="F:translation elongation factor activity"/>
    <property type="evidence" value="ECO:0007669"/>
    <property type="project" value="TreeGrafter"/>
</dbReference>
<dbReference type="GO" id="GO:0046677">
    <property type="term" value="P:response to antibiotic"/>
    <property type="evidence" value="ECO:0007669"/>
    <property type="project" value="UniProtKB-KW"/>
</dbReference>
<dbReference type="CDD" id="cd03711">
    <property type="entry name" value="Tet_C"/>
    <property type="match status" value="1"/>
</dbReference>
<dbReference type="CDD" id="cd03690">
    <property type="entry name" value="Tet_II"/>
    <property type="match status" value="1"/>
</dbReference>
<dbReference type="CDD" id="cd01684">
    <property type="entry name" value="Tet_like_IV"/>
    <property type="match status" value="1"/>
</dbReference>
<dbReference type="FunFam" id="3.40.50.300:FF:002549">
    <property type="entry name" value="Tetracycline resistance protein, GTP-binding elongation family"/>
    <property type="match status" value="1"/>
</dbReference>
<dbReference type="Gene3D" id="3.30.230.10">
    <property type="match status" value="1"/>
</dbReference>
<dbReference type="Gene3D" id="3.30.70.870">
    <property type="entry name" value="Elongation Factor G (Translational Gtpase), domain 3"/>
    <property type="match status" value="1"/>
</dbReference>
<dbReference type="Gene3D" id="3.40.50.300">
    <property type="entry name" value="P-loop containing nucleotide triphosphate hydrolases"/>
    <property type="match status" value="1"/>
</dbReference>
<dbReference type="Gene3D" id="2.40.30.10">
    <property type="entry name" value="Translation factors"/>
    <property type="match status" value="1"/>
</dbReference>
<dbReference type="InterPro" id="IPR035647">
    <property type="entry name" value="EFG_III/V"/>
</dbReference>
<dbReference type="InterPro" id="IPR000640">
    <property type="entry name" value="EFG_V-like"/>
</dbReference>
<dbReference type="InterPro" id="IPR027417">
    <property type="entry name" value="P-loop_NTPase"/>
</dbReference>
<dbReference type="InterPro" id="IPR020568">
    <property type="entry name" value="Ribosomal_Su5_D2-typ_SF"/>
</dbReference>
<dbReference type="InterPro" id="IPR014721">
    <property type="entry name" value="Ribsml_uS5_D2-typ_fold_subgr"/>
</dbReference>
<dbReference type="InterPro" id="IPR005225">
    <property type="entry name" value="Small_GTP-bd"/>
</dbReference>
<dbReference type="InterPro" id="IPR000795">
    <property type="entry name" value="T_Tr_GTP-bd_dom"/>
</dbReference>
<dbReference type="InterPro" id="IPR035650">
    <property type="entry name" value="Tet_C"/>
</dbReference>
<dbReference type="InterPro" id="IPR009000">
    <property type="entry name" value="Transl_B-barrel_sf"/>
</dbReference>
<dbReference type="InterPro" id="IPR005517">
    <property type="entry name" value="Transl_elong_EFG/EF2_IV"/>
</dbReference>
<dbReference type="NCBIfam" id="NF000120">
    <property type="entry name" value="47473_otr"/>
    <property type="match status" value="1"/>
</dbReference>
<dbReference type="NCBIfam" id="TIGR00231">
    <property type="entry name" value="small_GTP"/>
    <property type="match status" value="1"/>
</dbReference>
<dbReference type="NCBIfam" id="NF012153">
    <property type="entry name" value="tet_protect"/>
    <property type="match status" value="1"/>
</dbReference>
<dbReference type="PANTHER" id="PTHR43636">
    <property type="entry name" value="ELONGATION FACTOR G, MITOCHONDRIAL"/>
    <property type="match status" value="1"/>
</dbReference>
<dbReference type="PANTHER" id="PTHR43636:SF2">
    <property type="entry name" value="ELONGATION FACTOR G, MITOCHONDRIAL"/>
    <property type="match status" value="1"/>
</dbReference>
<dbReference type="Pfam" id="PF00679">
    <property type="entry name" value="EFG_C"/>
    <property type="match status" value="1"/>
</dbReference>
<dbReference type="Pfam" id="PF03764">
    <property type="entry name" value="EFG_IV"/>
    <property type="match status" value="1"/>
</dbReference>
<dbReference type="Pfam" id="PF00009">
    <property type="entry name" value="GTP_EFTU"/>
    <property type="match status" value="1"/>
</dbReference>
<dbReference type="PRINTS" id="PR00315">
    <property type="entry name" value="ELONGATNFCT"/>
</dbReference>
<dbReference type="PRINTS" id="PR01037">
    <property type="entry name" value="TCRTETOQM"/>
</dbReference>
<dbReference type="SMART" id="SM00889">
    <property type="entry name" value="EFG_IV"/>
    <property type="match status" value="1"/>
</dbReference>
<dbReference type="SUPFAM" id="SSF54980">
    <property type="entry name" value="EF-G C-terminal domain-like"/>
    <property type="match status" value="2"/>
</dbReference>
<dbReference type="SUPFAM" id="SSF52540">
    <property type="entry name" value="P-loop containing nucleoside triphosphate hydrolases"/>
    <property type="match status" value="1"/>
</dbReference>
<dbReference type="SUPFAM" id="SSF54211">
    <property type="entry name" value="Ribosomal protein S5 domain 2-like"/>
    <property type="match status" value="1"/>
</dbReference>
<dbReference type="SUPFAM" id="SSF50447">
    <property type="entry name" value="Translation proteins"/>
    <property type="match status" value="1"/>
</dbReference>
<dbReference type="PROSITE" id="PS51722">
    <property type="entry name" value="G_TR_2"/>
    <property type="match status" value="1"/>
</dbReference>
<sequence length="639" mass="67172">MRTLNIGILAHVDAGKTSLTERLLFDHGAVDRLGSVDAGDTRTVDGGIERRRGITIRSAVAAFTVGDTRVNLIDTPGHSDFVAEVERALEVLDGAVLLLSAVEGVQARTRVLMRALRRLRLPTIVFVNKIDRAGARTDGLLGDVRRLLTPHVAPLTEVADAGTPRARVTRRPPDGRTAEALAEVDTEVLAALVDGPEPTGEDVARALAARTADGSFHPLYHGSALGGQGVAELVEGLLGLIPAATPGTSGGTSGGTEPRGTVFAVRPGPAGERTAYLRLYGGEVHPRRRLTFLRRESDGRTTEVSGRVTRLDVVGGDATLTAGNIAALTVPGGLRVGDRLGGPTDRAPQFAPPTLQTLVRARHPEQAAPLRSALLALADQDPLLHARPAASGATALLLYGEVQMEVLAATLAEDFGIEAEFTPGRVRFLERPAGTDEAAEEMPWLDRTRYFATIGLRVEPGPRGSGGAFGYETELGALPRAFHQAVEETVHDTLRTGLTGAAVTDYRVTLIRSGFSSPLSTAADFRGLTPLVLRRALARAGTVLHEPYQAFEAEVPADTLAAVTALLASLGADFTGTTGGDPAWIVTGELPARRVREAELRLPGLTHGEAVWSSRPCEDRPLKAGNSGPGTGVGGHSGE</sequence>
<keyword id="KW-0046">Antibiotic resistance</keyword>
<keyword id="KW-0342">GTP-binding</keyword>
<keyword id="KW-0547">Nucleotide-binding</keyword>
<keyword id="KW-0648">Protein biosynthesis</keyword>
<name>TETM_STRLI</name>